<evidence type="ECO:0000250" key="1">
    <source>
        <dbReference type="UniProtKB" id="Q9FHP6"/>
    </source>
</evidence>
<evidence type="ECO:0000250" key="2">
    <source>
        <dbReference type="UniProtKB" id="Q9LVH4"/>
    </source>
</evidence>
<evidence type="ECO:0000255" key="3">
    <source>
        <dbReference type="PROSITE-ProRule" id="PRU00041"/>
    </source>
</evidence>
<evidence type="ECO:0000269" key="4">
    <source>
    </source>
</evidence>
<evidence type="ECO:0000303" key="5">
    <source>
    </source>
</evidence>
<evidence type="ECO:0000305" key="6">
    <source>
    </source>
</evidence>
<evidence type="ECO:0000312" key="7">
    <source>
        <dbReference type="Araport" id="AT1G48590"/>
    </source>
</evidence>
<evidence type="ECO:0000312" key="8">
    <source>
        <dbReference type="EMBL" id="AAF79703.1"/>
    </source>
</evidence>
<evidence type="ECO:0000312" key="9">
    <source>
        <dbReference type="Proteomes" id="UP000006548"/>
    </source>
</evidence>
<feature type="chain" id="PRO_0000433315" description="Protein C2-DOMAIN ABA-RELATED 5">
    <location>
        <begin position="1"/>
        <end position="200"/>
    </location>
</feature>
<feature type="domain" description="C2" evidence="3">
    <location>
        <begin position="22"/>
        <end position="142"/>
    </location>
</feature>
<feature type="binding site" evidence="2">
    <location>
        <position position="57"/>
    </location>
    <ligand>
        <name>Ca(2+)</name>
        <dbReference type="ChEBI" id="CHEBI:29108"/>
        <label>1</label>
    </ligand>
</feature>
<feature type="binding site" evidence="2">
    <location>
        <position position="58"/>
    </location>
    <ligand>
        <name>Ca(2+)</name>
        <dbReference type="ChEBI" id="CHEBI:29108"/>
        <label>1</label>
    </ligand>
</feature>
<feature type="binding site" evidence="2">
    <location>
        <position position="58"/>
    </location>
    <ligand>
        <name>Ca(2+)</name>
        <dbReference type="ChEBI" id="CHEBI:29108"/>
        <label>2</label>
    </ligand>
</feature>
<feature type="binding site" evidence="2">
    <location>
        <position position="63"/>
    </location>
    <ligand>
        <name>Ca(2+)</name>
        <dbReference type="ChEBI" id="CHEBI:29108"/>
        <label>2</label>
    </ligand>
</feature>
<feature type="binding site" evidence="2">
    <location>
        <position position="109"/>
    </location>
    <ligand>
        <name>Ca(2+)</name>
        <dbReference type="ChEBI" id="CHEBI:29108"/>
        <label>1</label>
    </ligand>
</feature>
<feature type="binding site" evidence="2">
    <location>
        <position position="109"/>
    </location>
    <ligand>
        <name>Ca(2+)</name>
        <dbReference type="ChEBI" id="CHEBI:29108"/>
        <label>2</label>
    </ligand>
</feature>
<feature type="binding site" evidence="2">
    <location>
        <position position="110"/>
    </location>
    <ligand>
        <name>Ca(2+)</name>
        <dbReference type="ChEBI" id="CHEBI:29108"/>
        <label>2</label>
    </ligand>
</feature>
<feature type="binding site" evidence="2">
    <location>
        <position position="111"/>
    </location>
    <ligand>
        <name>Ca(2+)</name>
        <dbReference type="ChEBI" id="CHEBI:29108"/>
        <label>1</label>
    </ligand>
</feature>
<feature type="binding site" evidence="2">
    <location>
        <position position="111"/>
    </location>
    <ligand>
        <name>Ca(2+)</name>
        <dbReference type="ChEBI" id="CHEBI:29108"/>
        <label>2</label>
    </ligand>
</feature>
<feature type="binding site" evidence="2">
    <location>
        <position position="117"/>
    </location>
    <ligand>
        <name>Ca(2+)</name>
        <dbReference type="ChEBI" id="CHEBI:29108"/>
        <label>1</label>
    </ligand>
</feature>
<feature type="splice variant" id="VSP_057721" description="In isoform 2.">
    <location>
        <begin position="1"/>
        <end position="31"/>
    </location>
</feature>
<feature type="splice variant" id="VSP_057722" description="In isoform 3.">
    <location>
        <begin position="74"/>
        <end position="105"/>
    </location>
</feature>
<sequence length="200" mass="22755">MIVSFLYFSSLFPTSLRKINLVAGEKHKDRRMKPSLMDSLLGLLRIRIKRGVNLAVRDLNSSDPYVVVKMAKQKLKTRVIYKNVNPEWNEDLTLSVSDPNLTVLLTVYDYDTFTKDDKMGDAEFGIKPFVNALKMHLHDLPSGTIVTTVQPSRDNCLAEESRVIWSDGKLVQDIVLRLRHVECGEVEAQLQWIDLPGKGL</sequence>
<keyword id="KW-0938">Abscisic acid signaling pathway</keyword>
<keyword id="KW-0025">Alternative splicing</keyword>
<keyword id="KW-0106">Calcium</keyword>
<keyword id="KW-1003">Cell membrane</keyword>
<keyword id="KW-0343">GTPase activation</keyword>
<keyword id="KW-0446">Lipid-binding</keyword>
<keyword id="KW-0472">Membrane</keyword>
<keyword id="KW-0479">Metal-binding</keyword>
<keyword id="KW-0539">Nucleus</keyword>
<keyword id="KW-1185">Reference proteome</keyword>
<protein>
    <recommendedName>
        <fullName evidence="5">Protein C2-DOMAIN ABA-RELATED 5</fullName>
    </recommendedName>
</protein>
<reference key="1">
    <citation type="journal article" date="2000" name="Nature">
        <title>Sequence and analysis of chromosome 1 of the plant Arabidopsis thaliana.</title>
        <authorList>
            <person name="Theologis A."/>
            <person name="Ecker J.R."/>
            <person name="Palm C.J."/>
            <person name="Federspiel N.A."/>
            <person name="Kaul S."/>
            <person name="White O."/>
            <person name="Alonso J."/>
            <person name="Altafi H."/>
            <person name="Araujo R."/>
            <person name="Bowman C.L."/>
            <person name="Brooks S.Y."/>
            <person name="Buehler E."/>
            <person name="Chan A."/>
            <person name="Chao Q."/>
            <person name="Chen H."/>
            <person name="Cheuk R.F."/>
            <person name="Chin C.W."/>
            <person name="Chung M.K."/>
            <person name="Conn L."/>
            <person name="Conway A.B."/>
            <person name="Conway A.R."/>
            <person name="Creasy T.H."/>
            <person name="Dewar K."/>
            <person name="Dunn P."/>
            <person name="Etgu P."/>
            <person name="Feldblyum T.V."/>
            <person name="Feng J.-D."/>
            <person name="Fong B."/>
            <person name="Fujii C.Y."/>
            <person name="Gill J.E."/>
            <person name="Goldsmith A.D."/>
            <person name="Haas B."/>
            <person name="Hansen N.F."/>
            <person name="Hughes B."/>
            <person name="Huizar L."/>
            <person name="Hunter J.L."/>
            <person name="Jenkins J."/>
            <person name="Johnson-Hopson C."/>
            <person name="Khan S."/>
            <person name="Khaykin E."/>
            <person name="Kim C.J."/>
            <person name="Koo H.L."/>
            <person name="Kremenetskaia I."/>
            <person name="Kurtz D.B."/>
            <person name="Kwan A."/>
            <person name="Lam B."/>
            <person name="Langin-Hooper S."/>
            <person name="Lee A."/>
            <person name="Lee J.M."/>
            <person name="Lenz C.A."/>
            <person name="Li J.H."/>
            <person name="Li Y.-P."/>
            <person name="Lin X."/>
            <person name="Liu S.X."/>
            <person name="Liu Z.A."/>
            <person name="Luros J.S."/>
            <person name="Maiti R."/>
            <person name="Marziali A."/>
            <person name="Militscher J."/>
            <person name="Miranda M."/>
            <person name="Nguyen M."/>
            <person name="Nierman W.C."/>
            <person name="Osborne B.I."/>
            <person name="Pai G."/>
            <person name="Peterson J."/>
            <person name="Pham P.K."/>
            <person name="Rizzo M."/>
            <person name="Rooney T."/>
            <person name="Rowley D."/>
            <person name="Sakano H."/>
            <person name="Salzberg S.L."/>
            <person name="Schwartz J.R."/>
            <person name="Shinn P."/>
            <person name="Southwick A.M."/>
            <person name="Sun H."/>
            <person name="Tallon L.J."/>
            <person name="Tambunga G."/>
            <person name="Toriumi M.J."/>
            <person name="Town C.D."/>
            <person name="Utterback T."/>
            <person name="Van Aken S."/>
            <person name="Vaysberg M."/>
            <person name="Vysotskaia V.S."/>
            <person name="Walker M."/>
            <person name="Wu D."/>
            <person name="Yu G."/>
            <person name="Fraser C.M."/>
            <person name="Venter J.C."/>
            <person name="Davis R.W."/>
        </authorList>
    </citation>
    <scope>NUCLEOTIDE SEQUENCE [LARGE SCALE GENOMIC DNA]</scope>
    <source>
        <strain>cv. Columbia</strain>
    </source>
</reference>
<reference key="2">
    <citation type="journal article" date="2017" name="Plant J.">
        <title>Araport11: a complete reannotation of the Arabidopsis thaliana reference genome.</title>
        <authorList>
            <person name="Cheng C.Y."/>
            <person name="Krishnakumar V."/>
            <person name="Chan A.P."/>
            <person name="Thibaud-Nissen F."/>
            <person name="Schobel S."/>
            <person name="Town C.D."/>
        </authorList>
    </citation>
    <scope>GENOME REANNOTATION</scope>
    <source>
        <strain>cv. Columbia</strain>
    </source>
</reference>
<reference key="3">
    <citation type="submission" date="2008-07" db="EMBL/GenBank/DDBJ databases">
        <title>Arabidopsis ORF clones.</title>
        <authorList>
            <person name="de los Reyes C."/>
            <person name="Quan R."/>
            <person name="Chen H."/>
            <person name="Bautista V."/>
            <person name="Kim C.J."/>
            <person name="Ecker J.R."/>
        </authorList>
    </citation>
    <scope>NUCLEOTIDE SEQUENCE [LARGE SCALE MRNA] (ISOFORM 2)</scope>
    <source>
        <strain>cv. Columbia</strain>
    </source>
</reference>
<reference key="4">
    <citation type="journal article" date="2014" name="Plant Cell">
        <title>C2-domain abscisic acid-related proteins mediate the interaction of PYR/PYL/RCAR abscisic acid receptors with the plasma membrane and regulate abscisic acid sensitivity in Arabidopsis.</title>
        <authorList>
            <person name="Rodriguez L."/>
            <person name="Gonzalez-Guzman M."/>
            <person name="Diaz M."/>
            <person name="Rodrigues A."/>
            <person name="Izquierdo-Garcia A.C."/>
            <person name="Peirats-Llobet M."/>
            <person name="Fernandez M.A."/>
            <person name="Antoni R."/>
            <person name="Fernandez D."/>
            <person name="Marquez J.A."/>
            <person name="Mulet J.M."/>
            <person name="Albert A."/>
            <person name="Rodriguez P.L."/>
        </authorList>
    </citation>
    <scope>FUNCTION</scope>
    <scope>DISRUPTION PHENOTYPE</scope>
    <scope>SUBCELLULAR LOCATION</scope>
    <scope>GENE FAMILY</scope>
    <scope>NOMENCLATURE</scope>
</reference>
<proteinExistence type="evidence at transcript level"/>
<organism evidence="9">
    <name type="scientific">Arabidopsis thaliana</name>
    <name type="common">Mouse-ear cress</name>
    <dbReference type="NCBI Taxonomy" id="3702"/>
    <lineage>
        <taxon>Eukaryota</taxon>
        <taxon>Viridiplantae</taxon>
        <taxon>Streptophyta</taxon>
        <taxon>Embryophyta</taxon>
        <taxon>Tracheophyta</taxon>
        <taxon>Spermatophyta</taxon>
        <taxon>Magnoliopsida</taxon>
        <taxon>eudicotyledons</taxon>
        <taxon>Gunneridae</taxon>
        <taxon>Pentapetalae</taxon>
        <taxon>rosids</taxon>
        <taxon>malvids</taxon>
        <taxon>Brassicales</taxon>
        <taxon>Brassicaceae</taxon>
        <taxon>Camelineae</taxon>
        <taxon>Arabidopsis</taxon>
    </lineage>
</organism>
<gene>
    <name evidence="5" type="primary">CAR5</name>
    <name evidence="7" type="ordered locus">At1g48590</name>
    <name evidence="8" type="ORF">T1N15.21</name>
</gene>
<accession>Q9LP65</accession>
<accession>B4G290</accession>
<accession>F4HYI3</accession>
<dbReference type="EMBL" id="AC020889">
    <property type="protein sequence ID" value="AAF79703.1"/>
    <property type="molecule type" value="Genomic_DNA"/>
</dbReference>
<dbReference type="EMBL" id="CP002684">
    <property type="protein sequence ID" value="AEE32319.1"/>
    <property type="molecule type" value="Genomic_DNA"/>
</dbReference>
<dbReference type="EMBL" id="CP002684">
    <property type="protein sequence ID" value="AEE32320.1"/>
    <property type="molecule type" value="Genomic_DNA"/>
</dbReference>
<dbReference type="EMBL" id="CP002684">
    <property type="protein sequence ID" value="AEE32321.1"/>
    <property type="molecule type" value="Genomic_DNA"/>
</dbReference>
<dbReference type="EMBL" id="CP002684">
    <property type="protein sequence ID" value="ANM60097.1"/>
    <property type="molecule type" value="Genomic_DNA"/>
</dbReference>
<dbReference type="EMBL" id="BT043478">
    <property type="protein sequence ID" value="ACF88483.1"/>
    <property type="molecule type" value="mRNA"/>
</dbReference>
<dbReference type="PIR" id="E96525">
    <property type="entry name" value="E96525"/>
</dbReference>
<dbReference type="RefSeq" id="NP_001185174.1">
    <molecule id="Q9LP65-1"/>
    <property type="nucleotide sequence ID" value="NM_001198245.1"/>
</dbReference>
<dbReference type="RefSeq" id="NP_001185175.1">
    <molecule id="Q9LP65-3"/>
    <property type="nucleotide sequence ID" value="NM_001198246.1"/>
</dbReference>
<dbReference type="RefSeq" id="NP_001322406.1">
    <molecule id="Q9LP65-2"/>
    <property type="nucleotide sequence ID" value="NM_001333345.1"/>
</dbReference>
<dbReference type="RefSeq" id="NP_175292.2">
    <molecule id="Q9LP65-2"/>
    <property type="nucleotide sequence ID" value="NM_103755.3"/>
</dbReference>
<dbReference type="SMR" id="Q9LP65"/>
<dbReference type="FunCoup" id="Q9LP65">
    <property type="interactions" value="15"/>
</dbReference>
<dbReference type="STRING" id="3702.Q9LP65"/>
<dbReference type="PaxDb" id="3702-AT1G48590.2"/>
<dbReference type="ProteomicsDB" id="222800">
    <molecule id="Q9LP65-1"/>
</dbReference>
<dbReference type="EnsemblPlants" id="AT1G48590.1">
    <molecule id="Q9LP65-2"/>
    <property type="protein sequence ID" value="AT1G48590.1"/>
    <property type="gene ID" value="AT1G48590"/>
</dbReference>
<dbReference type="EnsemblPlants" id="AT1G48590.2">
    <molecule id="Q9LP65-1"/>
    <property type="protein sequence ID" value="AT1G48590.2"/>
    <property type="gene ID" value="AT1G48590"/>
</dbReference>
<dbReference type="EnsemblPlants" id="AT1G48590.3">
    <molecule id="Q9LP65-3"/>
    <property type="protein sequence ID" value="AT1G48590.3"/>
    <property type="gene ID" value="AT1G48590"/>
</dbReference>
<dbReference type="EnsemblPlants" id="AT1G48590.4">
    <molecule id="Q9LP65-2"/>
    <property type="protein sequence ID" value="AT1G48590.4"/>
    <property type="gene ID" value="AT1G48590"/>
</dbReference>
<dbReference type="GeneID" id="841280"/>
<dbReference type="Gramene" id="AT1G48590.1">
    <molecule id="Q9LP65-2"/>
    <property type="protein sequence ID" value="AT1G48590.1"/>
    <property type="gene ID" value="AT1G48590"/>
</dbReference>
<dbReference type="Gramene" id="AT1G48590.2">
    <molecule id="Q9LP65-1"/>
    <property type="protein sequence ID" value="AT1G48590.2"/>
    <property type="gene ID" value="AT1G48590"/>
</dbReference>
<dbReference type="Gramene" id="AT1G48590.3">
    <molecule id="Q9LP65-3"/>
    <property type="protein sequence ID" value="AT1G48590.3"/>
    <property type="gene ID" value="AT1G48590"/>
</dbReference>
<dbReference type="Gramene" id="AT1G48590.4">
    <molecule id="Q9LP65-2"/>
    <property type="protein sequence ID" value="AT1G48590.4"/>
    <property type="gene ID" value="AT1G48590"/>
</dbReference>
<dbReference type="KEGG" id="ath:AT1G48590"/>
<dbReference type="Araport" id="AT1G48590"/>
<dbReference type="TAIR" id="AT1G48590">
    <property type="gene designation" value="CAR5"/>
</dbReference>
<dbReference type="eggNOG" id="KOG1030">
    <property type="taxonomic scope" value="Eukaryota"/>
</dbReference>
<dbReference type="InParanoid" id="Q9LP65"/>
<dbReference type="OrthoDB" id="73919at2759"/>
<dbReference type="PhylomeDB" id="Q9LP65"/>
<dbReference type="PRO" id="PR:Q9LP65"/>
<dbReference type="Proteomes" id="UP000006548">
    <property type="component" value="Chromosome 1"/>
</dbReference>
<dbReference type="ExpressionAtlas" id="Q9LP65">
    <property type="expression patterns" value="baseline and differential"/>
</dbReference>
<dbReference type="GO" id="GO:0005634">
    <property type="term" value="C:nucleus"/>
    <property type="evidence" value="ECO:0000314"/>
    <property type="project" value="UniProtKB"/>
</dbReference>
<dbReference type="GO" id="GO:0005886">
    <property type="term" value="C:plasma membrane"/>
    <property type="evidence" value="ECO:0000314"/>
    <property type="project" value="UniProtKB"/>
</dbReference>
<dbReference type="GO" id="GO:0005096">
    <property type="term" value="F:GTPase activator activity"/>
    <property type="evidence" value="ECO:0000250"/>
    <property type="project" value="UniProtKB"/>
</dbReference>
<dbReference type="GO" id="GO:0046872">
    <property type="term" value="F:metal ion binding"/>
    <property type="evidence" value="ECO:0007669"/>
    <property type="project" value="UniProtKB-KW"/>
</dbReference>
<dbReference type="GO" id="GO:0005543">
    <property type="term" value="F:phospholipid binding"/>
    <property type="evidence" value="ECO:0000250"/>
    <property type="project" value="UniProtKB"/>
</dbReference>
<dbReference type="GO" id="GO:0009738">
    <property type="term" value="P:abscisic acid-activated signaling pathway"/>
    <property type="evidence" value="ECO:0007669"/>
    <property type="project" value="UniProtKB-KW"/>
</dbReference>
<dbReference type="GO" id="GO:0009789">
    <property type="term" value="P:positive regulation of abscisic acid-activated signaling pathway"/>
    <property type="evidence" value="ECO:0000315"/>
    <property type="project" value="UniProtKB"/>
</dbReference>
<dbReference type="GO" id="GO:0043547">
    <property type="term" value="P:positive regulation of GTPase activity"/>
    <property type="evidence" value="ECO:0000250"/>
    <property type="project" value="UniProtKB"/>
</dbReference>
<dbReference type="CDD" id="cd04038">
    <property type="entry name" value="C2_ArfGAP"/>
    <property type="match status" value="1"/>
</dbReference>
<dbReference type="Gene3D" id="2.60.40.150">
    <property type="entry name" value="C2 domain"/>
    <property type="match status" value="1"/>
</dbReference>
<dbReference type="InterPro" id="IPR000008">
    <property type="entry name" value="C2_dom"/>
</dbReference>
<dbReference type="InterPro" id="IPR035892">
    <property type="entry name" value="C2_domain_sf"/>
</dbReference>
<dbReference type="InterPro" id="IPR044562">
    <property type="entry name" value="CAR1-11"/>
</dbReference>
<dbReference type="PANTHER" id="PTHR45933">
    <property type="entry name" value="PROTEIN C2-DOMAIN ABA-RELATED 4"/>
    <property type="match status" value="1"/>
</dbReference>
<dbReference type="PANTHER" id="PTHR45933:SF14">
    <property type="entry name" value="PROTEIN C2-DOMAIN ABA-RELATED 5"/>
    <property type="match status" value="1"/>
</dbReference>
<dbReference type="Pfam" id="PF00168">
    <property type="entry name" value="C2"/>
    <property type="match status" value="1"/>
</dbReference>
<dbReference type="PRINTS" id="PR00360">
    <property type="entry name" value="C2DOMAIN"/>
</dbReference>
<dbReference type="SMART" id="SM00239">
    <property type="entry name" value="C2"/>
    <property type="match status" value="1"/>
</dbReference>
<dbReference type="SUPFAM" id="SSF49562">
    <property type="entry name" value="C2 domain (Calcium/lipid-binding domain, CaLB)"/>
    <property type="match status" value="1"/>
</dbReference>
<dbReference type="PROSITE" id="PS50004">
    <property type="entry name" value="C2"/>
    <property type="match status" value="1"/>
</dbReference>
<name>CAR5_ARATH</name>
<comment type="function">
    <text evidence="2 4">Stimulates the GTPase/ATPase activities of Obg-like ATPases (By similarity). Mediates the transient calcium-dependent interaction of PYR/PYL/RCAR abscisic acid (ABA) receptors with the plasma membrane and thus regulates ABA sensitivity (PubMed:25465408).</text>
</comment>
<comment type="subunit">
    <text evidence="1">Binds to PYR/PYL/RCAR abscisic acid intracellular receptors in an ABA-independent manner, both at the plasma membrane and in the nucleus.</text>
</comment>
<comment type="subcellular location">
    <subcellularLocation>
        <location evidence="4">Cell membrane</location>
    </subcellularLocation>
    <subcellularLocation>
        <location evidence="4">Nucleus</location>
    </subcellularLocation>
</comment>
<comment type="alternative products">
    <event type="alternative splicing"/>
    <isoform>
        <id>Q9LP65-1</id>
        <name>1</name>
        <sequence type="displayed"/>
    </isoform>
    <isoform>
        <id>Q9LP65-2</id>
        <name>2</name>
        <sequence type="described" ref="VSP_057721"/>
    </isoform>
    <isoform>
        <id>Q9LP65-3</id>
        <name>3</name>
        <sequence type="described" ref="VSP_057722"/>
    </isoform>
</comment>
<comment type="disruption phenotype">
    <text evidence="4">When associated with disruption in CAR1, CAR4 and CAR9 genes, reduced sensitivity to abscisic acid (ABA) during seedling establishment and root growth regulation.</text>
</comment>
<comment type="similarity">
    <text evidence="6">Belongs to the plant CAR protein family.</text>
</comment>